<feature type="chain" id="PRO_0000019298" description="Transforming protein v-Myb">
    <location>
        <begin position="1" status="less than"/>
        <end position="178"/>
    </location>
</feature>
<feature type="chain" id="PRO_0000019299" description="Transforming protein v-Ets">
    <location>
        <begin position="179"/>
        <end position="669"/>
    </location>
</feature>
<feature type="domain" description="PNT" evidence="3">
    <location>
        <begin position="276"/>
        <end position="361"/>
    </location>
</feature>
<feature type="DNA-binding region" description="ETS" evidence="2">
    <location>
        <begin position="556"/>
        <end position="640"/>
    </location>
</feature>
<feature type="region of interest" description="Disordered" evidence="4">
    <location>
        <begin position="1"/>
        <end position="27"/>
    </location>
</feature>
<feature type="region of interest" description="Transcriptional activation domain" evidence="1">
    <location>
        <begin position="90"/>
        <end position="142"/>
    </location>
</feature>
<feature type="region of interest" description="Disordered" evidence="4">
    <location>
        <begin position="132"/>
        <end position="153"/>
    </location>
</feature>
<feature type="compositionally biased region" description="Basic and acidic residues" evidence="4">
    <location>
        <begin position="1"/>
        <end position="10"/>
    </location>
</feature>
<feature type="sequence variant" description="In strain: mutant TS1.">
    <original>H</original>
    <variation>D</variation>
    <location>
        <position position="628"/>
    </location>
</feature>
<feature type="sequence conflict" description="In Ref. 3; AAB59928." evidence="5" ref="3">
    <original>D</original>
    <variation>N</variation>
    <location>
        <position position="610"/>
    </location>
</feature>
<feature type="non-terminal residue">
    <location>
        <position position="1"/>
    </location>
</feature>
<name>MYBE_AVILE</name>
<comment type="function">
    <text>DNA-binding protein that specifically recognizes the sequence 5'-YAAC[GT]G-3'. The Myb-Ets protein induces predominantly erythroblastosis in chicken and transforms avian erythroblasts and immature myelomonocytic cells in culture. It appears that the Ets domain is responsible for the effects on erythroid cells and that the Myb domain encodes the myeloid-transforming capacity.</text>
</comment>
<comment type="subcellular location">
    <subcellularLocation>
        <location evidence="5">Host nucleus</location>
    </subcellularLocation>
</comment>
<gene>
    <name type="primary">GAG</name>
</gene>
<evidence type="ECO:0000250" key="1"/>
<evidence type="ECO:0000255" key="2">
    <source>
        <dbReference type="PROSITE-ProRule" id="PRU00237"/>
    </source>
</evidence>
<evidence type="ECO:0000255" key="3">
    <source>
        <dbReference type="PROSITE-ProRule" id="PRU00762"/>
    </source>
</evidence>
<evidence type="ECO:0000256" key="4">
    <source>
        <dbReference type="SAM" id="MobiDB-lite"/>
    </source>
</evidence>
<evidence type="ECO:0000305" key="5"/>
<dbReference type="EMBL" id="X00144">
    <property type="protein sequence ID" value="CAA24979.1"/>
    <property type="molecule type" value="Genomic_DNA"/>
</dbReference>
<dbReference type="EMBL" id="M23542">
    <property type="protein sequence ID" value="AAB59928.1"/>
    <property type="molecule type" value="Genomic_DNA"/>
</dbReference>
<dbReference type="PIR" id="B01348">
    <property type="entry name" value="TVFVES"/>
</dbReference>
<dbReference type="BMRB" id="P01105"/>
<dbReference type="SMR" id="P01105"/>
<dbReference type="GO" id="GO:0042025">
    <property type="term" value="C:host cell nucleus"/>
    <property type="evidence" value="ECO:0007669"/>
    <property type="project" value="UniProtKB-SubCell"/>
</dbReference>
<dbReference type="GO" id="GO:0000981">
    <property type="term" value="F:DNA-binding transcription factor activity, RNA polymerase II-specific"/>
    <property type="evidence" value="ECO:0007669"/>
    <property type="project" value="TreeGrafter"/>
</dbReference>
<dbReference type="GO" id="GO:0043565">
    <property type="term" value="F:sequence-specific DNA binding"/>
    <property type="evidence" value="ECO:0007669"/>
    <property type="project" value="InterPro"/>
</dbReference>
<dbReference type="CDD" id="cd08542">
    <property type="entry name" value="SAM_PNT-ETS-1"/>
    <property type="match status" value="1"/>
</dbReference>
<dbReference type="FunFam" id="1.10.10.10:FF:000097">
    <property type="entry name" value="Protein c-ets-1 isoform 1"/>
    <property type="match status" value="1"/>
</dbReference>
<dbReference type="FunFam" id="1.10.150.50:FF:000014">
    <property type="entry name" value="Protein c-ets-1 isoform 1"/>
    <property type="match status" value="1"/>
</dbReference>
<dbReference type="Gene3D" id="1.10.150.50">
    <property type="entry name" value="Transcription Factor, Ets-1"/>
    <property type="match status" value="1"/>
</dbReference>
<dbReference type="Gene3D" id="1.10.10.10">
    <property type="entry name" value="Winged helix-like DNA-binding domain superfamily/Winged helix DNA-binding domain"/>
    <property type="match status" value="1"/>
</dbReference>
<dbReference type="InterPro" id="IPR045688">
    <property type="entry name" value="Ets1_N_flank"/>
</dbReference>
<dbReference type="InterPro" id="IPR000418">
    <property type="entry name" value="Ets_dom"/>
</dbReference>
<dbReference type="InterPro" id="IPR046328">
    <property type="entry name" value="ETS_fam"/>
</dbReference>
<dbReference type="InterPro" id="IPR003118">
    <property type="entry name" value="Pointed_dom"/>
</dbReference>
<dbReference type="InterPro" id="IPR013761">
    <property type="entry name" value="SAM/pointed_sf"/>
</dbReference>
<dbReference type="InterPro" id="IPR041886">
    <property type="entry name" value="SAM_PNT-ETS-1"/>
</dbReference>
<dbReference type="InterPro" id="IPR012642">
    <property type="entry name" value="Tscrpt_reg_Wos2-domain"/>
</dbReference>
<dbReference type="InterPro" id="IPR036388">
    <property type="entry name" value="WH-like_DNA-bd_sf"/>
</dbReference>
<dbReference type="InterPro" id="IPR036390">
    <property type="entry name" value="WH_DNA-bd_sf"/>
</dbReference>
<dbReference type="PANTHER" id="PTHR11849">
    <property type="entry name" value="ETS"/>
    <property type="match status" value="1"/>
</dbReference>
<dbReference type="PANTHER" id="PTHR11849:SF209">
    <property type="entry name" value="ETS TRANSLOCATION VARIANT 2"/>
    <property type="match status" value="1"/>
</dbReference>
<dbReference type="Pfam" id="PF00178">
    <property type="entry name" value="Ets"/>
    <property type="match status" value="1"/>
</dbReference>
<dbReference type="Pfam" id="PF19525">
    <property type="entry name" value="Ets1_N_flank"/>
    <property type="match status" value="1"/>
</dbReference>
<dbReference type="Pfam" id="PF07988">
    <property type="entry name" value="LMSTEN"/>
    <property type="match status" value="1"/>
</dbReference>
<dbReference type="Pfam" id="PF02198">
    <property type="entry name" value="SAM_PNT"/>
    <property type="match status" value="1"/>
</dbReference>
<dbReference type="PRINTS" id="PR00454">
    <property type="entry name" value="ETSDOMAIN"/>
</dbReference>
<dbReference type="SMART" id="SM00413">
    <property type="entry name" value="ETS"/>
    <property type="match status" value="1"/>
</dbReference>
<dbReference type="SMART" id="SM00251">
    <property type="entry name" value="SAM_PNT"/>
    <property type="match status" value="1"/>
</dbReference>
<dbReference type="SUPFAM" id="SSF47769">
    <property type="entry name" value="SAM/Pointed domain"/>
    <property type="match status" value="1"/>
</dbReference>
<dbReference type="SUPFAM" id="SSF46785">
    <property type="entry name" value="Winged helix' DNA-binding domain"/>
    <property type="match status" value="1"/>
</dbReference>
<dbReference type="PROSITE" id="PS00345">
    <property type="entry name" value="ETS_DOMAIN_1"/>
    <property type="match status" value="1"/>
</dbReference>
<dbReference type="PROSITE" id="PS00346">
    <property type="entry name" value="ETS_DOMAIN_2"/>
    <property type="match status" value="1"/>
</dbReference>
<dbReference type="PROSITE" id="PS50061">
    <property type="entry name" value="ETS_DOMAIN_3"/>
    <property type="match status" value="1"/>
</dbReference>
<dbReference type="PROSITE" id="PS51433">
    <property type="entry name" value="PNT"/>
    <property type="match status" value="1"/>
</dbReference>
<sequence length="669" mass="74727">NSTMRRKVEQEGYLQESSKAGLPSATTGFQKSSHLMAFAHNPPAGPLPGAGQAPLGSDYPYYHIAEPQNVPGQIPYPVALHVNIVNVPQPAAAAIQRHYNDEDPEKEKRIKELELLLMSTENELKGQQALPTQNHTANYPGWHSTTVADNTMTSGDNAPVSCLGEHHHCTPSPPVDHGTSEMMSYYMDTTIGSTGPYPLARPGVMQGASSCCEDPWMPCRLQSACCPPRSCCPPWDEAAIQEVPTGLEHYSTDMECADVPLLTPSSKEMMSQALKATFSGFAKEQQRLGIPKDPQQWTETHVRDWVMWAVNEFSLKGVDFQKFCMNGAALCALGKECFLELAPDFVGDILWEHLEILQKEEAKPYPANGVNAAYPESRYTSDYFISYGIEHAQCVPPSEFSEPSFITESYQTLHPISSEELLSLKYENDYPSVILRDPVQTDSLQTDYFTIKQEVVTPDNMCMGRVSRGKLGGQDSFESIESYDSCDRLTQSWSSQSSFQSLQRVPSYDSFDSEDYPAALPNHKPKGTFKDYVRDRADMNKDKPVIPAAALAGYTGSGPIQLWQFLLELLTDKSCQSFISWTGDGWEFKLSDPDEVARRWGKRKNKPKMDYEKLSRGLRYYYDKNVIHKTAGKRYVYRFVCDLQSLLGYTPEEHSSASGLTSSMACSSF</sequence>
<keyword id="KW-0238">DNA-binding</keyword>
<keyword id="KW-1048">Host nucleus</keyword>
<keyword id="KW-0553">Oncogene</keyword>
<proteinExistence type="predicted"/>
<organism>
    <name type="scientific">Avian leukemia virus E26</name>
    <dbReference type="NCBI Taxonomy" id="11913"/>
    <lineage>
        <taxon>Viruses</taxon>
        <taxon>Riboviria</taxon>
        <taxon>Pararnavirae</taxon>
        <taxon>Artverviricota</taxon>
        <taxon>Revtraviricetes</taxon>
        <taxon>Ortervirales</taxon>
        <taxon>Retroviridae</taxon>
        <taxon>Orthoretrovirinae</taxon>
        <taxon>Alpharetrovirus</taxon>
        <taxon>Avian leukosis virus</taxon>
    </lineage>
</organism>
<reference key="1">
    <citation type="journal article" date="1983" name="Nature">
        <title>Tripartite structure of the avian erythroblastosis virus E26 transforming gene.</title>
        <authorList>
            <person name="Nunn M.F."/>
            <person name="Seeburg P.H."/>
            <person name="Moscovici C."/>
            <person name="Duesberg P.H."/>
        </authorList>
    </citation>
    <scope>NUCLEOTIDE SEQUENCE [GENOMIC DNA]</scope>
</reference>
<reference key="2">
    <citation type="journal article" date="1984" name="Virology">
        <title>Avian erythroblastosis virus E26: nucleotide sequence of the tripartite onc gene and of the LTR, and analysis of the cellular prototype of the viral ets sequence.</title>
        <authorList>
            <person name="Nunn M."/>
            <person name="Weiher H."/>
            <person name="Bullock P."/>
            <person name="Duesberg P."/>
        </authorList>
    </citation>
    <scope>NUCLEOTIDE SEQUENCE [GENOMIC DNA]</scope>
</reference>
<reference key="3">
    <citation type="journal article" date="1988" name="Cell">
        <title>A single point mutation in the v-ets oncogene affects both erythroid and myelomonocytic cell differentiation.</title>
        <authorList>
            <person name="Golay J."/>
            <person name="Introna M."/>
            <person name="Graf T."/>
        </authorList>
    </citation>
    <scope>NUCLEOTIDE SEQUENCE [GENOMIC DNA] OF 589-669</scope>
    <source>
        <strain>Mutant TS1.1</strain>
    </source>
</reference>
<organismHost>
    <name type="scientific">Galliformes</name>
    <dbReference type="NCBI Taxonomy" id="8976"/>
</organismHost>
<protein>
    <recommendedName>
        <fullName>p135Gag-Myb-Ets-transforming protein</fullName>
    </recommendedName>
    <component>
        <recommendedName>
            <fullName>Transforming protein v-Myb</fullName>
        </recommendedName>
    </component>
    <component>
        <recommendedName>
            <fullName>Transforming protein v-Ets</fullName>
        </recommendedName>
    </component>
</protein>
<accession>P01105</accession>
<accession>Q64998</accession>